<sequence>MTTEQTISANVQFFTISDDEAGQRLDNFLLAKLKGVPKSLIYRIVRKGEVRVNKGRVKPDYKLQHNDIVRIPLVRVTPKNEAPISTKLNKVAELEQHILYEDDVMLVLNKPSGIGVHGGSGLSFGVIEALRALRPQARFLELVHRIDRDTSGILLVAKKRSALRALHEQLREKVVQKDYLALVRGQWQAHINVIKAPLLKNELQSGERIVKVSEQGKPSETRFSIEERYPNATLIKASPITGRTHQIRVHTQYAGHPIACDDRYGDQAFDAKLKQAGLNRLFLHAHSIRFEHPKTAEQMFITAPLDHHLKTILAKLRAEK</sequence>
<feature type="chain" id="PRO_0000162670" description="Ribosomal large subunit pseudouridine synthase C">
    <location>
        <begin position="1"/>
        <end position="320"/>
    </location>
</feature>
<feature type="domain" description="S4 RNA-binding" evidence="2">
    <location>
        <begin position="23"/>
        <end position="95"/>
    </location>
</feature>
<feature type="active site" evidence="1">
    <location>
        <position position="147"/>
    </location>
</feature>
<proteinExistence type="inferred from homology"/>
<comment type="function">
    <text evidence="1">Responsible for synthesis of pseudouridine from uracil at positions 955, 2504 and 2580 in 23S ribosomal RNA.</text>
</comment>
<comment type="catalytic activity">
    <reaction>
        <text>uridine(955/2504/2580) in 23S rRNA = pseudouridine(955/2504/2580) in 23S rRNA</text>
        <dbReference type="Rhea" id="RHEA:42528"/>
        <dbReference type="Rhea" id="RHEA-COMP:10099"/>
        <dbReference type="Rhea" id="RHEA-COMP:10100"/>
        <dbReference type="ChEBI" id="CHEBI:65314"/>
        <dbReference type="ChEBI" id="CHEBI:65315"/>
        <dbReference type="EC" id="5.4.99.24"/>
    </reaction>
</comment>
<comment type="similarity">
    <text evidence="3">Belongs to the pseudouridine synthase RluA family.</text>
</comment>
<name>RLUC_HAEDU</name>
<dbReference type="EC" id="5.4.99.24"/>
<dbReference type="EMBL" id="AE017143">
    <property type="protein sequence ID" value="AAP95570.1"/>
    <property type="molecule type" value="Genomic_DNA"/>
</dbReference>
<dbReference type="RefSeq" id="WP_010944623.1">
    <property type="nucleotide sequence ID" value="NC_002940.2"/>
</dbReference>
<dbReference type="SMR" id="P59835"/>
<dbReference type="STRING" id="233412.HD_0645"/>
<dbReference type="KEGG" id="hdu:HD_0645"/>
<dbReference type="eggNOG" id="COG0564">
    <property type="taxonomic scope" value="Bacteria"/>
</dbReference>
<dbReference type="HOGENOM" id="CLU_016902_1_1_6"/>
<dbReference type="OrthoDB" id="9807829at2"/>
<dbReference type="Proteomes" id="UP000001022">
    <property type="component" value="Chromosome"/>
</dbReference>
<dbReference type="GO" id="GO:0160141">
    <property type="term" value="F:23S rRNA pseudouridine(955/2504/2580) synthase activity"/>
    <property type="evidence" value="ECO:0007669"/>
    <property type="project" value="UniProtKB-EC"/>
</dbReference>
<dbReference type="GO" id="GO:0003723">
    <property type="term" value="F:RNA binding"/>
    <property type="evidence" value="ECO:0007669"/>
    <property type="project" value="UniProtKB-KW"/>
</dbReference>
<dbReference type="GO" id="GO:0000455">
    <property type="term" value="P:enzyme-directed rRNA pseudouridine synthesis"/>
    <property type="evidence" value="ECO:0007669"/>
    <property type="project" value="TreeGrafter"/>
</dbReference>
<dbReference type="CDD" id="cd02869">
    <property type="entry name" value="PseudoU_synth_RluA_like"/>
    <property type="match status" value="1"/>
</dbReference>
<dbReference type="CDD" id="cd00165">
    <property type="entry name" value="S4"/>
    <property type="match status" value="1"/>
</dbReference>
<dbReference type="Gene3D" id="3.30.2350.10">
    <property type="entry name" value="Pseudouridine synthase"/>
    <property type="match status" value="1"/>
</dbReference>
<dbReference type="Gene3D" id="3.10.290.10">
    <property type="entry name" value="RNA-binding S4 domain"/>
    <property type="match status" value="1"/>
</dbReference>
<dbReference type="InterPro" id="IPR020103">
    <property type="entry name" value="PsdUridine_synth_cat_dom_sf"/>
</dbReference>
<dbReference type="InterPro" id="IPR006224">
    <property type="entry name" value="PsdUridine_synth_RluA-like_CS"/>
</dbReference>
<dbReference type="InterPro" id="IPR006225">
    <property type="entry name" value="PsdUridine_synth_RluC/D"/>
</dbReference>
<dbReference type="InterPro" id="IPR006145">
    <property type="entry name" value="PsdUridine_synth_RsuA/RluA"/>
</dbReference>
<dbReference type="InterPro" id="IPR050188">
    <property type="entry name" value="RluA_PseudoU_synthase"/>
</dbReference>
<dbReference type="InterPro" id="IPR002942">
    <property type="entry name" value="S4_RNA-bd"/>
</dbReference>
<dbReference type="InterPro" id="IPR036986">
    <property type="entry name" value="S4_RNA-bd_sf"/>
</dbReference>
<dbReference type="NCBIfam" id="NF008249">
    <property type="entry name" value="PRK11025.1"/>
    <property type="match status" value="1"/>
</dbReference>
<dbReference type="NCBIfam" id="TIGR00005">
    <property type="entry name" value="rluA_subfam"/>
    <property type="match status" value="1"/>
</dbReference>
<dbReference type="PANTHER" id="PTHR21600">
    <property type="entry name" value="MITOCHONDRIAL RNA PSEUDOURIDINE SYNTHASE"/>
    <property type="match status" value="1"/>
</dbReference>
<dbReference type="PANTHER" id="PTHR21600:SF92">
    <property type="entry name" value="RIBOSOMAL LARGE SUBUNIT PSEUDOURIDINE SYNTHASE C"/>
    <property type="match status" value="1"/>
</dbReference>
<dbReference type="Pfam" id="PF00849">
    <property type="entry name" value="PseudoU_synth_2"/>
    <property type="match status" value="1"/>
</dbReference>
<dbReference type="Pfam" id="PF01479">
    <property type="entry name" value="S4"/>
    <property type="match status" value="1"/>
</dbReference>
<dbReference type="SMART" id="SM00363">
    <property type="entry name" value="S4"/>
    <property type="match status" value="1"/>
</dbReference>
<dbReference type="SUPFAM" id="SSF55174">
    <property type="entry name" value="Alpha-L RNA-binding motif"/>
    <property type="match status" value="1"/>
</dbReference>
<dbReference type="SUPFAM" id="SSF55120">
    <property type="entry name" value="Pseudouridine synthase"/>
    <property type="match status" value="1"/>
</dbReference>
<dbReference type="PROSITE" id="PS01129">
    <property type="entry name" value="PSI_RLU"/>
    <property type="match status" value="1"/>
</dbReference>
<dbReference type="PROSITE" id="PS50889">
    <property type="entry name" value="S4"/>
    <property type="match status" value="1"/>
</dbReference>
<protein>
    <recommendedName>
        <fullName>Ribosomal large subunit pseudouridine synthase C</fullName>
        <ecNumber>5.4.99.24</ecNumber>
    </recommendedName>
    <alternativeName>
        <fullName>23S rRNA pseudouridine(955/2504/2580) synthase</fullName>
    </alternativeName>
    <alternativeName>
        <fullName>rRNA pseudouridylate synthase C</fullName>
    </alternativeName>
    <alternativeName>
        <fullName>rRNA-uridine isomerase C</fullName>
    </alternativeName>
</protein>
<accession>P59835</accession>
<keyword id="KW-0413">Isomerase</keyword>
<keyword id="KW-1185">Reference proteome</keyword>
<keyword id="KW-0694">RNA-binding</keyword>
<keyword id="KW-0698">rRNA processing</keyword>
<evidence type="ECO:0000250" key="1"/>
<evidence type="ECO:0000255" key="2">
    <source>
        <dbReference type="PROSITE-ProRule" id="PRU00182"/>
    </source>
</evidence>
<evidence type="ECO:0000305" key="3"/>
<organism>
    <name type="scientific">Haemophilus ducreyi (strain 35000HP / ATCC 700724)</name>
    <dbReference type="NCBI Taxonomy" id="233412"/>
    <lineage>
        <taxon>Bacteria</taxon>
        <taxon>Pseudomonadati</taxon>
        <taxon>Pseudomonadota</taxon>
        <taxon>Gammaproteobacteria</taxon>
        <taxon>Pasteurellales</taxon>
        <taxon>Pasteurellaceae</taxon>
        <taxon>Haemophilus</taxon>
    </lineage>
</organism>
<reference key="1">
    <citation type="submission" date="2003-06" db="EMBL/GenBank/DDBJ databases">
        <title>The complete genome sequence of Haemophilus ducreyi.</title>
        <authorList>
            <person name="Munson R.S. Jr."/>
            <person name="Ray W.C."/>
            <person name="Mahairas G."/>
            <person name="Sabo P."/>
            <person name="Mungur R."/>
            <person name="Johnson L."/>
            <person name="Nguyen D."/>
            <person name="Wang J."/>
            <person name="Forst C."/>
            <person name="Hood L."/>
        </authorList>
    </citation>
    <scope>NUCLEOTIDE SEQUENCE [LARGE SCALE GENOMIC DNA]</scope>
    <source>
        <strain>35000HP / ATCC 700724</strain>
    </source>
</reference>
<gene>
    <name type="primary">rluC</name>
    <name type="ordered locus">HD_0645</name>
</gene>